<comment type="function">
    <text evidence="2 3">Uptake of allantoin into the cell (PubMed:11344136, PubMed:26967546). Allantoin uptake is not dependent on sodium, and PucI is likely to be a proton-coupled symporter (PubMed:26967546). Shows highest recognition for binding of allantoin, good recognition for binding of hydantoin, L-5-benzylhydantoin and 5-hydroxyhydantoin, and to a lesser extent for a range of nucleobases and nucleosides (PubMed:26967546).</text>
</comment>
<comment type="catalytic activity">
    <reaction evidence="7">
        <text>(S)-allantoin(in) + H(+)(in) = (S)-allantoin(out) + H(+)(out)</text>
        <dbReference type="Rhea" id="RHEA:28723"/>
        <dbReference type="ChEBI" id="CHEBI:15378"/>
        <dbReference type="ChEBI" id="CHEBI:15678"/>
    </reaction>
    <physiologicalReaction direction="right-to-left" evidence="7">
        <dbReference type="Rhea" id="RHEA:28725"/>
    </physiologicalReaction>
</comment>
<comment type="subcellular location">
    <subcellularLocation>
        <location evidence="3">Cell membrane</location>
        <topology evidence="1">Multi-pass membrane protein</topology>
    </subcellularLocation>
</comment>
<comment type="induction">
    <text evidence="2">Expression is very low in excess nitrogen (glutamate plus ammonia) and is induced during limiting-nitrogen conditions (glutamate). Expression is further induced when allantoin or allantoate are added during limiting-nitrogen conditions.</text>
</comment>
<comment type="similarity">
    <text evidence="6">Belongs to the purine-cytosine permease (2.A.39) family.</text>
</comment>
<dbReference type="EMBL" id="Z82987">
    <property type="protein sequence ID" value="CAB05378.1"/>
    <property type="molecule type" value="Genomic_DNA"/>
</dbReference>
<dbReference type="EMBL" id="AL009126">
    <property type="protein sequence ID" value="CAB15664.1"/>
    <property type="molecule type" value="Genomic_DNA"/>
</dbReference>
<dbReference type="PIR" id="H70064">
    <property type="entry name" value="H70064"/>
</dbReference>
<dbReference type="RefSeq" id="NP_391528.1">
    <property type="nucleotide sequence ID" value="NC_000964.3"/>
</dbReference>
<dbReference type="RefSeq" id="WP_003243156.1">
    <property type="nucleotide sequence ID" value="NZ_OZ025638.1"/>
</dbReference>
<dbReference type="SMR" id="P94575"/>
<dbReference type="FunCoup" id="P94575">
    <property type="interactions" value="326"/>
</dbReference>
<dbReference type="STRING" id="224308.BSU36470"/>
<dbReference type="TCDB" id="2.A.39.3.4">
    <property type="family name" value="the nucleobase:cation symporter-1 (ncs1) family"/>
</dbReference>
<dbReference type="PaxDb" id="224308-BSU36470"/>
<dbReference type="EnsemblBacteria" id="CAB15664">
    <property type="protein sequence ID" value="CAB15664"/>
    <property type="gene ID" value="BSU_36470"/>
</dbReference>
<dbReference type="GeneID" id="936935"/>
<dbReference type="KEGG" id="bsu:BSU36470"/>
<dbReference type="PATRIC" id="fig|224308.179.peg.3946"/>
<dbReference type="eggNOG" id="COG1953">
    <property type="taxonomic scope" value="Bacteria"/>
</dbReference>
<dbReference type="InParanoid" id="P94575"/>
<dbReference type="OrthoDB" id="9780088at2"/>
<dbReference type="PhylomeDB" id="P94575"/>
<dbReference type="BioCyc" id="BSUB:BSU36470-MONOMER"/>
<dbReference type="Proteomes" id="UP000001570">
    <property type="component" value="Chromosome"/>
</dbReference>
<dbReference type="GO" id="GO:0005886">
    <property type="term" value="C:plasma membrane"/>
    <property type="evidence" value="ECO:0000318"/>
    <property type="project" value="GO_Central"/>
</dbReference>
<dbReference type="GO" id="GO:0015205">
    <property type="term" value="F:nucleobase transmembrane transporter activity"/>
    <property type="evidence" value="ECO:0000318"/>
    <property type="project" value="GO_Central"/>
</dbReference>
<dbReference type="GO" id="GO:0015293">
    <property type="term" value="F:symporter activity"/>
    <property type="evidence" value="ECO:0007669"/>
    <property type="project" value="UniProtKB-KW"/>
</dbReference>
<dbReference type="GO" id="GO:0015851">
    <property type="term" value="P:nucleobase transport"/>
    <property type="evidence" value="ECO:0000318"/>
    <property type="project" value="GO_Central"/>
</dbReference>
<dbReference type="CDD" id="cd11485">
    <property type="entry name" value="SLC-NCS1sbd_YbbW-like"/>
    <property type="match status" value="1"/>
</dbReference>
<dbReference type="Gene3D" id="1.10.4160.10">
    <property type="entry name" value="Hydantoin permease"/>
    <property type="match status" value="1"/>
</dbReference>
<dbReference type="InterPro" id="IPR012681">
    <property type="entry name" value="NCS1"/>
</dbReference>
<dbReference type="InterPro" id="IPR001248">
    <property type="entry name" value="Pur-cyt_permease"/>
</dbReference>
<dbReference type="InterPro" id="IPR045225">
    <property type="entry name" value="Uracil/uridine/allantoin_perm"/>
</dbReference>
<dbReference type="NCBIfam" id="TIGR00800">
    <property type="entry name" value="ncs1"/>
    <property type="match status" value="1"/>
</dbReference>
<dbReference type="PANTHER" id="PTHR30618">
    <property type="entry name" value="NCS1 FAMILY PURINE/PYRIMIDINE TRANSPORTER"/>
    <property type="match status" value="1"/>
</dbReference>
<dbReference type="PANTHER" id="PTHR30618:SF0">
    <property type="entry name" value="PURINE-URACIL PERMEASE NCS1"/>
    <property type="match status" value="1"/>
</dbReference>
<dbReference type="Pfam" id="PF02133">
    <property type="entry name" value="Transp_cyt_pur"/>
    <property type="match status" value="1"/>
</dbReference>
<reference key="1">
    <citation type="journal article" date="1997" name="Microbiology">
        <title>The Bacillus subtilis genome from gerBC (311 degrees) to licR (334 degrees).</title>
        <authorList>
            <person name="Presecan E."/>
            <person name="Moszer I."/>
            <person name="Boursier L."/>
            <person name="Cruz Ramos H."/>
            <person name="De La Fuente V."/>
            <person name="Hullo M.-F."/>
            <person name="Lelong C."/>
            <person name="Schleich S."/>
            <person name="Sekowska A."/>
            <person name="Song B.H."/>
            <person name="Villani G."/>
            <person name="Kunst F."/>
            <person name="Danchin A."/>
            <person name="Glaser P."/>
        </authorList>
    </citation>
    <scope>NUCLEOTIDE SEQUENCE [GENOMIC DNA]</scope>
    <source>
        <strain>168</strain>
    </source>
</reference>
<reference key="2">
    <citation type="journal article" date="1997" name="Nature">
        <title>The complete genome sequence of the Gram-positive bacterium Bacillus subtilis.</title>
        <authorList>
            <person name="Kunst F."/>
            <person name="Ogasawara N."/>
            <person name="Moszer I."/>
            <person name="Albertini A.M."/>
            <person name="Alloni G."/>
            <person name="Azevedo V."/>
            <person name="Bertero M.G."/>
            <person name="Bessieres P."/>
            <person name="Bolotin A."/>
            <person name="Borchert S."/>
            <person name="Borriss R."/>
            <person name="Boursier L."/>
            <person name="Brans A."/>
            <person name="Braun M."/>
            <person name="Brignell S.C."/>
            <person name="Bron S."/>
            <person name="Brouillet S."/>
            <person name="Bruschi C.V."/>
            <person name="Caldwell B."/>
            <person name="Capuano V."/>
            <person name="Carter N.M."/>
            <person name="Choi S.-K."/>
            <person name="Codani J.-J."/>
            <person name="Connerton I.F."/>
            <person name="Cummings N.J."/>
            <person name="Daniel R.A."/>
            <person name="Denizot F."/>
            <person name="Devine K.M."/>
            <person name="Duesterhoeft A."/>
            <person name="Ehrlich S.D."/>
            <person name="Emmerson P.T."/>
            <person name="Entian K.-D."/>
            <person name="Errington J."/>
            <person name="Fabret C."/>
            <person name="Ferrari E."/>
            <person name="Foulger D."/>
            <person name="Fritz C."/>
            <person name="Fujita M."/>
            <person name="Fujita Y."/>
            <person name="Fuma S."/>
            <person name="Galizzi A."/>
            <person name="Galleron N."/>
            <person name="Ghim S.-Y."/>
            <person name="Glaser P."/>
            <person name="Goffeau A."/>
            <person name="Golightly E.J."/>
            <person name="Grandi G."/>
            <person name="Guiseppi G."/>
            <person name="Guy B.J."/>
            <person name="Haga K."/>
            <person name="Haiech J."/>
            <person name="Harwood C.R."/>
            <person name="Henaut A."/>
            <person name="Hilbert H."/>
            <person name="Holsappel S."/>
            <person name="Hosono S."/>
            <person name="Hullo M.-F."/>
            <person name="Itaya M."/>
            <person name="Jones L.-M."/>
            <person name="Joris B."/>
            <person name="Karamata D."/>
            <person name="Kasahara Y."/>
            <person name="Klaerr-Blanchard M."/>
            <person name="Klein C."/>
            <person name="Kobayashi Y."/>
            <person name="Koetter P."/>
            <person name="Koningstein G."/>
            <person name="Krogh S."/>
            <person name="Kumano M."/>
            <person name="Kurita K."/>
            <person name="Lapidus A."/>
            <person name="Lardinois S."/>
            <person name="Lauber J."/>
            <person name="Lazarevic V."/>
            <person name="Lee S.-M."/>
            <person name="Levine A."/>
            <person name="Liu H."/>
            <person name="Masuda S."/>
            <person name="Mauel C."/>
            <person name="Medigue C."/>
            <person name="Medina N."/>
            <person name="Mellado R.P."/>
            <person name="Mizuno M."/>
            <person name="Moestl D."/>
            <person name="Nakai S."/>
            <person name="Noback M."/>
            <person name="Noone D."/>
            <person name="O'Reilly M."/>
            <person name="Ogawa K."/>
            <person name="Ogiwara A."/>
            <person name="Oudega B."/>
            <person name="Park S.-H."/>
            <person name="Parro V."/>
            <person name="Pohl T.M."/>
            <person name="Portetelle D."/>
            <person name="Porwollik S."/>
            <person name="Prescott A.M."/>
            <person name="Presecan E."/>
            <person name="Pujic P."/>
            <person name="Purnelle B."/>
            <person name="Rapoport G."/>
            <person name="Rey M."/>
            <person name="Reynolds S."/>
            <person name="Rieger M."/>
            <person name="Rivolta C."/>
            <person name="Rocha E."/>
            <person name="Roche B."/>
            <person name="Rose M."/>
            <person name="Sadaie Y."/>
            <person name="Sato T."/>
            <person name="Scanlan E."/>
            <person name="Schleich S."/>
            <person name="Schroeter R."/>
            <person name="Scoffone F."/>
            <person name="Sekiguchi J."/>
            <person name="Sekowska A."/>
            <person name="Seror S.J."/>
            <person name="Serror P."/>
            <person name="Shin B.-S."/>
            <person name="Soldo B."/>
            <person name="Sorokin A."/>
            <person name="Tacconi E."/>
            <person name="Takagi T."/>
            <person name="Takahashi H."/>
            <person name="Takemaru K."/>
            <person name="Takeuchi M."/>
            <person name="Tamakoshi A."/>
            <person name="Tanaka T."/>
            <person name="Terpstra P."/>
            <person name="Tognoni A."/>
            <person name="Tosato V."/>
            <person name="Uchiyama S."/>
            <person name="Vandenbol M."/>
            <person name="Vannier F."/>
            <person name="Vassarotti A."/>
            <person name="Viari A."/>
            <person name="Wambutt R."/>
            <person name="Wedler E."/>
            <person name="Wedler H."/>
            <person name="Weitzenegger T."/>
            <person name="Winters P."/>
            <person name="Wipat A."/>
            <person name="Yamamoto H."/>
            <person name="Yamane K."/>
            <person name="Yasumoto K."/>
            <person name="Yata K."/>
            <person name="Yoshida K."/>
            <person name="Yoshikawa H.-F."/>
            <person name="Zumstein E."/>
            <person name="Yoshikawa H."/>
            <person name="Danchin A."/>
        </authorList>
    </citation>
    <scope>NUCLEOTIDE SEQUENCE [LARGE SCALE GENOMIC DNA]</scope>
    <source>
        <strain>168</strain>
    </source>
</reference>
<reference key="3">
    <citation type="journal article" date="2001" name="J. Bacteriol.">
        <title>Functional analysis of 14 genes that constitute the purine catabolic pathway in Bacillus subtilis and evidence for a novel regulon controlled by the PucR transcription activator.</title>
        <authorList>
            <person name="Schultz A.C."/>
            <person name="Nygaard P."/>
            <person name="Saxild H.H."/>
        </authorList>
    </citation>
    <scope>FUNCTION</scope>
    <scope>INDUCTION</scope>
    <source>
        <strain>168</strain>
    </source>
</reference>
<reference key="4">
    <citation type="journal article" date="2016" name="Microbiology">
        <title>Allantoin transport protein, PucI, from Bacillus subtilis: evolutionary relationships, amplified expression, activity and specificity.</title>
        <authorList>
            <person name="Ma P."/>
            <person name="Patching S.G."/>
            <person name="Ivanova E."/>
            <person name="Baldwin J.M."/>
            <person name="Sharples D."/>
            <person name="Baldwin S.A."/>
            <person name="Henderson P.J.F."/>
        </authorList>
    </citation>
    <scope>FUNCTION</scope>
    <scope>SUBCELLULAR LOCATION</scope>
</reference>
<organism>
    <name type="scientific">Bacillus subtilis (strain 168)</name>
    <dbReference type="NCBI Taxonomy" id="224308"/>
    <lineage>
        <taxon>Bacteria</taxon>
        <taxon>Bacillati</taxon>
        <taxon>Bacillota</taxon>
        <taxon>Bacilli</taxon>
        <taxon>Bacillales</taxon>
        <taxon>Bacillaceae</taxon>
        <taxon>Bacillus</taxon>
    </lineage>
</organism>
<proteinExistence type="evidence at transcript level"/>
<feature type="chain" id="PRO_0000197931" description="Allantoin permease">
    <location>
        <begin position="1"/>
        <end position="490"/>
    </location>
</feature>
<feature type="transmembrane region" description="Helical" evidence="1">
    <location>
        <begin position="36"/>
        <end position="56"/>
    </location>
</feature>
<feature type="transmembrane region" description="Helical" evidence="1">
    <location>
        <begin position="60"/>
        <end position="80"/>
    </location>
</feature>
<feature type="transmembrane region" description="Helical" evidence="1">
    <location>
        <begin position="116"/>
        <end position="136"/>
    </location>
</feature>
<feature type="transmembrane region" description="Helical" evidence="1">
    <location>
        <begin position="151"/>
        <end position="171"/>
    </location>
</feature>
<feature type="transmembrane region" description="Helical" evidence="1">
    <location>
        <begin position="190"/>
        <end position="210"/>
    </location>
</feature>
<feature type="transmembrane region" description="Helical" evidence="1">
    <location>
        <begin position="225"/>
        <end position="245"/>
    </location>
</feature>
<feature type="transmembrane region" description="Helical" evidence="1">
    <location>
        <begin position="265"/>
        <end position="285"/>
    </location>
</feature>
<feature type="transmembrane region" description="Helical" evidence="1">
    <location>
        <begin position="308"/>
        <end position="328"/>
    </location>
</feature>
<feature type="transmembrane region" description="Helical" evidence="1">
    <location>
        <begin position="350"/>
        <end position="370"/>
    </location>
</feature>
<feature type="transmembrane region" description="Helical" evidence="1">
    <location>
        <begin position="373"/>
        <end position="393"/>
    </location>
</feature>
<feature type="transmembrane region" description="Helical" evidence="1">
    <location>
        <begin position="425"/>
        <end position="445"/>
    </location>
</feature>
<feature type="transmembrane region" description="Helical" evidence="1">
    <location>
        <begin position="448"/>
        <end position="468"/>
    </location>
</feature>
<sequence length="490" mass="53982">MKLKESQQQSNRLSNEDLVPLGQEKRTWKAMNFASIWMGCIHNIPTYATVGGLIAIGLSPWQVLAIIITASLILFGALALNGHAGTKYGLPFPVIIRASYGIYGANIPALLRAFTAIMWLGIQTFAGSTALNILLLNMWPGWGEIGGEWNILGIHLSGLLSFVFFWAIHLLVLHHGMESIKRFEVWAGPLVYLVFGGMVWWAVDIAGGLGPIYSQPGKFHTFSETFWPFAAGVTGIIGIWATLILNIPDFTRFAETQKEQIKGQFYGLPGTFALFAFASITVTSGSQVAFGEPIWDVVDILARFDNPYVIVLSVITLCIATISVNVAANIVSPAYDIANALPKYINFKRGSFITALLALFTVPWKLMESATSVYAFLGLIGGMLGPVAGVMMADYFIIRKRELSVDDLYSETGRYVYWKGYNYRAFAATMLGALISLIGMYVPVLKSLYDISWFVGVLISFLFYIVLMRVHPPASLAIETVEHAQVRQAE</sequence>
<protein>
    <recommendedName>
        <fullName evidence="4">Allantoin permease</fullName>
    </recommendedName>
    <alternativeName>
        <fullName evidence="5">Allantoin transport protein</fullName>
    </alternativeName>
    <alternativeName>
        <fullName evidence="4">Allantoin transporter</fullName>
    </alternativeName>
</protein>
<accession>P94575</accession>
<name>ALLP_BACSU</name>
<keyword id="KW-1003">Cell membrane</keyword>
<keyword id="KW-0472">Membrane</keyword>
<keyword id="KW-1185">Reference proteome</keyword>
<keyword id="KW-0769">Symport</keyword>
<keyword id="KW-0812">Transmembrane</keyword>
<keyword id="KW-1133">Transmembrane helix</keyword>
<keyword id="KW-0813">Transport</keyword>
<evidence type="ECO:0000255" key="1"/>
<evidence type="ECO:0000269" key="2">
    <source>
    </source>
</evidence>
<evidence type="ECO:0000269" key="3">
    <source>
    </source>
</evidence>
<evidence type="ECO:0000303" key="4">
    <source>
    </source>
</evidence>
<evidence type="ECO:0000303" key="5">
    <source>
    </source>
</evidence>
<evidence type="ECO:0000305" key="6"/>
<evidence type="ECO:0000305" key="7">
    <source>
    </source>
</evidence>
<gene>
    <name evidence="4" type="primary">pucI</name>
    <name type="synonym">ywoE</name>
    <name type="ordered locus">BSU36470</name>
</gene>